<accession>Q4HZ47</accession>
<accession>A0A0E0SFZ4</accession>
<accession>A0A1I9FQ50</accession>
<accession>V6RQU8</accession>
<sequence length="321" mass="36276">MAPETKNDFLEIADSDADSDIGYNSEEDDMQKGGRGAKRRKVESDDEDDPGSDIGSDDEDEATEKDSKKTQEEDKKEDQPEKPKRKSKDTTSTELPDVTRTLTKKNLVASEAAIKKSGVVYLSRIPPFMKPAKLRSLLEPYGTINRIFLAPEDPASHARRVRAGGNKKRSYTEGWVEFTKKKDAKAVCDLLNARTIGGKKGSYYHDDLWNLLYLKGFKWHNLTEQIAAENAERSSRMRAEISKSTKENKEFVRNVEKAKMLDGMAVKAKAKKRKAETHTEGQEDESVRQVKRSFKQVPLAKKKMDGEDQPAEVTRVLSKIF</sequence>
<reference key="1">
    <citation type="journal article" date="2007" name="Science">
        <title>The Fusarium graminearum genome reveals a link between localized polymorphism and pathogen specialization.</title>
        <authorList>
            <person name="Cuomo C.A."/>
            <person name="Gueldener U."/>
            <person name="Xu J.-R."/>
            <person name="Trail F."/>
            <person name="Turgeon B.G."/>
            <person name="Di Pietro A."/>
            <person name="Walton J.D."/>
            <person name="Ma L.-J."/>
            <person name="Baker S.E."/>
            <person name="Rep M."/>
            <person name="Adam G."/>
            <person name="Antoniw J."/>
            <person name="Baldwin T."/>
            <person name="Calvo S.E."/>
            <person name="Chang Y.-L."/>
            <person name="DeCaprio D."/>
            <person name="Gale L.R."/>
            <person name="Gnerre S."/>
            <person name="Goswami R.S."/>
            <person name="Hammond-Kosack K."/>
            <person name="Harris L.J."/>
            <person name="Hilburn K."/>
            <person name="Kennell J.C."/>
            <person name="Kroken S."/>
            <person name="Magnuson J.K."/>
            <person name="Mannhaupt G."/>
            <person name="Mauceli E.W."/>
            <person name="Mewes H.-W."/>
            <person name="Mitterbauer R."/>
            <person name="Muehlbauer G."/>
            <person name="Muensterkoetter M."/>
            <person name="Nelson D."/>
            <person name="O'Donnell K."/>
            <person name="Ouellet T."/>
            <person name="Qi W."/>
            <person name="Quesneville H."/>
            <person name="Roncero M.I.G."/>
            <person name="Seong K.-Y."/>
            <person name="Tetko I.V."/>
            <person name="Urban M."/>
            <person name="Waalwijk C."/>
            <person name="Ward T.J."/>
            <person name="Yao J."/>
            <person name="Birren B.W."/>
            <person name="Kistler H.C."/>
        </authorList>
    </citation>
    <scope>NUCLEOTIDE SEQUENCE [LARGE SCALE GENOMIC DNA]</scope>
    <source>
        <strain>ATCC MYA-4620 / CBS 123657 / FGSC 9075 / NRRL 31084 / PH-1</strain>
    </source>
</reference>
<reference key="2">
    <citation type="journal article" date="2010" name="Nature">
        <title>Comparative genomics reveals mobile pathogenicity chromosomes in Fusarium.</title>
        <authorList>
            <person name="Ma L.-J."/>
            <person name="van der Does H.C."/>
            <person name="Borkovich K.A."/>
            <person name="Coleman J.J."/>
            <person name="Daboussi M.-J."/>
            <person name="Di Pietro A."/>
            <person name="Dufresne M."/>
            <person name="Freitag M."/>
            <person name="Grabherr M."/>
            <person name="Henrissat B."/>
            <person name="Houterman P.M."/>
            <person name="Kang S."/>
            <person name="Shim W.-B."/>
            <person name="Woloshuk C."/>
            <person name="Xie X."/>
            <person name="Xu J.-R."/>
            <person name="Antoniw J."/>
            <person name="Baker S.E."/>
            <person name="Bluhm B.H."/>
            <person name="Breakspear A."/>
            <person name="Brown D.W."/>
            <person name="Butchko R.A.E."/>
            <person name="Chapman S."/>
            <person name="Coulson R."/>
            <person name="Coutinho P.M."/>
            <person name="Danchin E.G.J."/>
            <person name="Diener A."/>
            <person name="Gale L.R."/>
            <person name="Gardiner D.M."/>
            <person name="Goff S."/>
            <person name="Hammond-Kosack K.E."/>
            <person name="Hilburn K."/>
            <person name="Hua-Van A."/>
            <person name="Jonkers W."/>
            <person name="Kazan K."/>
            <person name="Kodira C.D."/>
            <person name="Koehrsen M."/>
            <person name="Kumar L."/>
            <person name="Lee Y.-H."/>
            <person name="Li L."/>
            <person name="Manners J.M."/>
            <person name="Miranda-Saavedra D."/>
            <person name="Mukherjee M."/>
            <person name="Park G."/>
            <person name="Park J."/>
            <person name="Park S.-Y."/>
            <person name="Proctor R.H."/>
            <person name="Regev A."/>
            <person name="Ruiz-Roldan M.C."/>
            <person name="Sain D."/>
            <person name="Sakthikumar S."/>
            <person name="Sykes S."/>
            <person name="Schwartz D.C."/>
            <person name="Turgeon B.G."/>
            <person name="Wapinski I."/>
            <person name="Yoder O."/>
            <person name="Young S."/>
            <person name="Zeng Q."/>
            <person name="Zhou S."/>
            <person name="Galagan J."/>
            <person name="Cuomo C.A."/>
            <person name="Kistler H.C."/>
            <person name="Rep M."/>
        </authorList>
    </citation>
    <scope>GENOME REANNOTATION</scope>
    <source>
        <strain>ATCC MYA-4620 / CBS 123657 / FGSC 9075 / NRRL 31084 / PH-1</strain>
    </source>
</reference>
<reference key="3">
    <citation type="journal article" date="2015" name="BMC Genomics">
        <title>The completed genome sequence of the pathogenic ascomycete fungus Fusarium graminearum.</title>
        <authorList>
            <person name="King R."/>
            <person name="Urban M."/>
            <person name="Hammond-Kosack M.C.U."/>
            <person name="Hassani-Pak K."/>
            <person name="Hammond-Kosack K.E."/>
        </authorList>
    </citation>
    <scope>NUCLEOTIDE SEQUENCE [LARGE SCALE GENOMIC DNA]</scope>
    <source>
        <strain>ATCC MYA-4620 / CBS 123657 / FGSC 9075 / NRRL 31084 / PH-1</strain>
    </source>
</reference>
<proteinExistence type="inferred from homology"/>
<keyword id="KW-0539">Nucleus</keyword>
<keyword id="KW-1185">Reference proteome</keyword>
<keyword id="KW-0690">Ribosome biogenesis</keyword>
<keyword id="KW-0694">RNA-binding</keyword>
<keyword id="KW-0698">rRNA processing</keyword>
<name>ESF2_GIBZE</name>
<dbReference type="EMBL" id="DS231668">
    <property type="protein sequence ID" value="ESU16357.1"/>
    <property type="molecule type" value="Genomic_DNA"/>
</dbReference>
<dbReference type="EMBL" id="HG970335">
    <property type="status" value="NOT_ANNOTATED_CDS"/>
    <property type="molecule type" value="Genomic_DNA"/>
</dbReference>
<dbReference type="RefSeq" id="XP_011327959.1">
    <property type="nucleotide sequence ID" value="XM_011329657.1"/>
</dbReference>
<dbReference type="FunCoup" id="Q4HZ47">
    <property type="interactions" value="937"/>
</dbReference>
<dbReference type="STRING" id="229533.Q4HZ47"/>
<dbReference type="GeneID" id="23556697"/>
<dbReference type="KEGG" id="fgr:FGSG_09761"/>
<dbReference type="eggNOG" id="KOG3152">
    <property type="taxonomic scope" value="Eukaryota"/>
</dbReference>
<dbReference type="HOGENOM" id="CLU_054086_0_1_1"/>
<dbReference type="InParanoid" id="Q4HZ47"/>
<dbReference type="OrthoDB" id="109260at110618"/>
<dbReference type="Proteomes" id="UP000070720">
    <property type="component" value="Chromosome 4"/>
</dbReference>
<dbReference type="GO" id="GO:0005730">
    <property type="term" value="C:nucleolus"/>
    <property type="evidence" value="ECO:0007669"/>
    <property type="project" value="UniProtKB-SubCell"/>
</dbReference>
<dbReference type="GO" id="GO:0003723">
    <property type="term" value="F:RNA binding"/>
    <property type="evidence" value="ECO:0007669"/>
    <property type="project" value="UniProtKB-KW"/>
</dbReference>
<dbReference type="GO" id="GO:0000480">
    <property type="term" value="P:endonucleolytic cleavage in 5'-ETS of tricistronic rRNA transcript (SSU-rRNA, 5.8S rRNA, LSU-rRNA)"/>
    <property type="evidence" value="ECO:0007669"/>
    <property type="project" value="TreeGrafter"/>
</dbReference>
<dbReference type="GO" id="GO:0000447">
    <property type="term" value="P:endonucleolytic cleavage in ITS1 to separate SSU-rRNA from 5.8S rRNA and LSU-rRNA from tricistronic rRNA transcript (SSU-rRNA, 5.8S rRNA, LSU-rRNA)"/>
    <property type="evidence" value="ECO:0007669"/>
    <property type="project" value="TreeGrafter"/>
</dbReference>
<dbReference type="GO" id="GO:0000472">
    <property type="term" value="P:endonucleolytic cleavage to generate mature 5'-end of SSU-rRNA from (SSU-rRNA, 5.8S rRNA, LSU-rRNA)"/>
    <property type="evidence" value="ECO:0007669"/>
    <property type="project" value="TreeGrafter"/>
</dbReference>
<dbReference type="GO" id="GO:0034462">
    <property type="term" value="P:small-subunit processome assembly"/>
    <property type="evidence" value="ECO:0007669"/>
    <property type="project" value="TreeGrafter"/>
</dbReference>
<dbReference type="CDD" id="cd12263">
    <property type="entry name" value="RRM_ABT1_like"/>
    <property type="match status" value="1"/>
</dbReference>
<dbReference type="FunFam" id="3.30.70.330:FF:001147">
    <property type="entry name" value="Pre-rRNA-processing protein esf-2"/>
    <property type="match status" value="1"/>
</dbReference>
<dbReference type="Gene3D" id="3.30.70.330">
    <property type="match status" value="1"/>
</dbReference>
<dbReference type="InterPro" id="IPR039119">
    <property type="entry name" value="ABT1/Esf2"/>
</dbReference>
<dbReference type="InterPro" id="IPR034353">
    <property type="entry name" value="ABT1/ESF2_RRM"/>
</dbReference>
<dbReference type="InterPro" id="IPR012677">
    <property type="entry name" value="Nucleotide-bd_a/b_plait_sf"/>
</dbReference>
<dbReference type="InterPro" id="IPR035979">
    <property type="entry name" value="RBD_domain_sf"/>
</dbReference>
<dbReference type="InterPro" id="IPR000504">
    <property type="entry name" value="RRM_dom"/>
</dbReference>
<dbReference type="PANTHER" id="PTHR12311">
    <property type="entry name" value="ACTIVATOR OF BASAL TRANSCRIPTION 1"/>
    <property type="match status" value="1"/>
</dbReference>
<dbReference type="PANTHER" id="PTHR12311:SF7">
    <property type="entry name" value="ACTIVATOR OF BASAL TRANSCRIPTION 1"/>
    <property type="match status" value="1"/>
</dbReference>
<dbReference type="Pfam" id="PF00076">
    <property type="entry name" value="RRM_1"/>
    <property type="match status" value="1"/>
</dbReference>
<dbReference type="SMART" id="SM00360">
    <property type="entry name" value="RRM"/>
    <property type="match status" value="1"/>
</dbReference>
<dbReference type="SUPFAM" id="SSF54928">
    <property type="entry name" value="RNA-binding domain, RBD"/>
    <property type="match status" value="1"/>
</dbReference>
<dbReference type="PROSITE" id="PS50102">
    <property type="entry name" value="RRM"/>
    <property type="match status" value="1"/>
</dbReference>
<evidence type="ECO:0000250" key="1"/>
<evidence type="ECO:0000255" key="2">
    <source>
        <dbReference type="PROSITE-ProRule" id="PRU00176"/>
    </source>
</evidence>
<evidence type="ECO:0000256" key="3">
    <source>
        <dbReference type="SAM" id="MobiDB-lite"/>
    </source>
</evidence>
<evidence type="ECO:0000305" key="4"/>
<comment type="function">
    <text evidence="1">Involved in the small subunit (SSU) processome assembly and function, and in the 18S rRNA synthesis. Required for the early cleavages at sites A0, A1 and A2 (By similarity).</text>
</comment>
<comment type="subcellular location">
    <subcellularLocation>
        <location evidence="1">Nucleus</location>
        <location evidence="1">Nucleolus</location>
    </subcellularLocation>
</comment>
<comment type="similarity">
    <text evidence="4">Belongs to the ESF2/ABP1 family.</text>
</comment>
<protein>
    <recommendedName>
        <fullName>Pre-rRNA-processing protein ESF2</fullName>
    </recommendedName>
    <alternativeName>
        <fullName>18S rRNA factor 2</fullName>
    </alternativeName>
</protein>
<feature type="chain" id="PRO_0000285373" description="Pre-rRNA-processing protein ESF2">
    <location>
        <begin position="1"/>
        <end position="321"/>
    </location>
</feature>
<feature type="domain" description="RRM" evidence="2">
    <location>
        <begin position="118"/>
        <end position="208"/>
    </location>
</feature>
<feature type="region of interest" description="Disordered" evidence="3">
    <location>
        <begin position="1"/>
        <end position="98"/>
    </location>
</feature>
<feature type="region of interest" description="Disordered" evidence="3">
    <location>
        <begin position="266"/>
        <end position="291"/>
    </location>
</feature>
<feature type="compositionally biased region" description="Acidic residues" evidence="3">
    <location>
        <begin position="11"/>
        <end position="29"/>
    </location>
</feature>
<feature type="compositionally biased region" description="Acidic residues" evidence="3">
    <location>
        <begin position="44"/>
        <end position="63"/>
    </location>
</feature>
<feature type="compositionally biased region" description="Basic and acidic residues" evidence="3">
    <location>
        <begin position="64"/>
        <end position="82"/>
    </location>
</feature>
<feature type="compositionally biased region" description="Basic and acidic residues" evidence="3">
    <location>
        <begin position="276"/>
        <end position="288"/>
    </location>
</feature>
<gene>
    <name type="primary">ESF2</name>
    <name type="ORF">FGRRES_09761</name>
    <name type="ORF">FGSG_09761</name>
</gene>
<organism>
    <name type="scientific">Gibberella zeae (strain ATCC MYA-4620 / CBS 123657 / FGSC 9075 / NRRL 31084 / PH-1)</name>
    <name type="common">Wheat head blight fungus</name>
    <name type="synonym">Fusarium graminearum</name>
    <dbReference type="NCBI Taxonomy" id="229533"/>
    <lineage>
        <taxon>Eukaryota</taxon>
        <taxon>Fungi</taxon>
        <taxon>Dikarya</taxon>
        <taxon>Ascomycota</taxon>
        <taxon>Pezizomycotina</taxon>
        <taxon>Sordariomycetes</taxon>
        <taxon>Hypocreomycetidae</taxon>
        <taxon>Hypocreales</taxon>
        <taxon>Nectriaceae</taxon>
        <taxon>Fusarium</taxon>
    </lineage>
</organism>